<evidence type="ECO:0000255" key="1">
    <source>
        <dbReference type="HAMAP-Rule" id="MF_00184"/>
    </source>
</evidence>
<evidence type="ECO:0000255" key="2">
    <source>
        <dbReference type="PROSITE-ProRule" id="PRU01228"/>
    </source>
</evidence>
<organism>
    <name type="scientific">Protochlamydia amoebophila (strain UWE25)</name>
    <dbReference type="NCBI Taxonomy" id="264201"/>
    <lineage>
        <taxon>Bacteria</taxon>
        <taxon>Pseudomonadati</taxon>
        <taxon>Chlamydiota</taxon>
        <taxon>Chlamydiia</taxon>
        <taxon>Parachlamydiales</taxon>
        <taxon>Parachlamydiaceae</taxon>
        <taxon>Candidatus Protochlamydia</taxon>
    </lineage>
</organism>
<dbReference type="EC" id="6.1.1.3" evidence="1"/>
<dbReference type="EMBL" id="BX908798">
    <property type="protein sequence ID" value="CAF24739.1"/>
    <property type="molecule type" value="Genomic_DNA"/>
</dbReference>
<dbReference type="SMR" id="Q6M9L0"/>
<dbReference type="STRING" id="264201.pc2015"/>
<dbReference type="eggNOG" id="COG0441">
    <property type="taxonomic scope" value="Bacteria"/>
</dbReference>
<dbReference type="HOGENOM" id="CLU_008554_0_1_0"/>
<dbReference type="Proteomes" id="UP000000529">
    <property type="component" value="Chromosome"/>
</dbReference>
<dbReference type="GO" id="GO:0005737">
    <property type="term" value="C:cytoplasm"/>
    <property type="evidence" value="ECO:0007669"/>
    <property type="project" value="UniProtKB-SubCell"/>
</dbReference>
<dbReference type="GO" id="GO:0005524">
    <property type="term" value="F:ATP binding"/>
    <property type="evidence" value="ECO:0007669"/>
    <property type="project" value="UniProtKB-UniRule"/>
</dbReference>
<dbReference type="GO" id="GO:0046872">
    <property type="term" value="F:metal ion binding"/>
    <property type="evidence" value="ECO:0007669"/>
    <property type="project" value="UniProtKB-KW"/>
</dbReference>
<dbReference type="GO" id="GO:0004829">
    <property type="term" value="F:threonine-tRNA ligase activity"/>
    <property type="evidence" value="ECO:0007669"/>
    <property type="project" value="UniProtKB-UniRule"/>
</dbReference>
<dbReference type="GO" id="GO:0000049">
    <property type="term" value="F:tRNA binding"/>
    <property type="evidence" value="ECO:0007669"/>
    <property type="project" value="UniProtKB-KW"/>
</dbReference>
<dbReference type="GO" id="GO:0006435">
    <property type="term" value="P:threonyl-tRNA aminoacylation"/>
    <property type="evidence" value="ECO:0007669"/>
    <property type="project" value="UniProtKB-UniRule"/>
</dbReference>
<dbReference type="CDD" id="cd01667">
    <property type="entry name" value="TGS_ThrRS"/>
    <property type="match status" value="1"/>
</dbReference>
<dbReference type="CDD" id="cd00860">
    <property type="entry name" value="ThrRS_anticodon"/>
    <property type="match status" value="1"/>
</dbReference>
<dbReference type="CDD" id="cd00771">
    <property type="entry name" value="ThrRS_core"/>
    <property type="match status" value="1"/>
</dbReference>
<dbReference type="FunFam" id="3.30.930.10:FF:000019">
    <property type="entry name" value="Threonine--tRNA ligase"/>
    <property type="match status" value="1"/>
</dbReference>
<dbReference type="FunFam" id="3.40.50.800:FF:000001">
    <property type="entry name" value="Threonine--tRNA ligase"/>
    <property type="match status" value="1"/>
</dbReference>
<dbReference type="FunFam" id="3.30.980.10:FF:000005">
    <property type="entry name" value="Threonyl-tRNA synthetase, mitochondrial"/>
    <property type="match status" value="1"/>
</dbReference>
<dbReference type="Gene3D" id="3.10.20.30">
    <property type="match status" value="1"/>
</dbReference>
<dbReference type="Gene3D" id="3.30.54.20">
    <property type="match status" value="1"/>
</dbReference>
<dbReference type="Gene3D" id="3.40.50.800">
    <property type="entry name" value="Anticodon-binding domain"/>
    <property type="match status" value="1"/>
</dbReference>
<dbReference type="Gene3D" id="3.30.930.10">
    <property type="entry name" value="Bira Bifunctional Protein, Domain 2"/>
    <property type="match status" value="1"/>
</dbReference>
<dbReference type="Gene3D" id="3.30.980.10">
    <property type="entry name" value="Threonyl-trna Synthetase, Chain A, domain 2"/>
    <property type="match status" value="1"/>
</dbReference>
<dbReference type="HAMAP" id="MF_00184">
    <property type="entry name" value="Thr_tRNA_synth"/>
    <property type="match status" value="1"/>
</dbReference>
<dbReference type="InterPro" id="IPR002314">
    <property type="entry name" value="aa-tRNA-synt_IIb"/>
</dbReference>
<dbReference type="InterPro" id="IPR006195">
    <property type="entry name" value="aa-tRNA-synth_II"/>
</dbReference>
<dbReference type="InterPro" id="IPR045864">
    <property type="entry name" value="aa-tRNA-synth_II/BPL/LPL"/>
</dbReference>
<dbReference type="InterPro" id="IPR004154">
    <property type="entry name" value="Anticodon-bd"/>
</dbReference>
<dbReference type="InterPro" id="IPR036621">
    <property type="entry name" value="Anticodon-bd_dom_sf"/>
</dbReference>
<dbReference type="InterPro" id="IPR012675">
    <property type="entry name" value="Beta-grasp_dom_sf"/>
</dbReference>
<dbReference type="InterPro" id="IPR004095">
    <property type="entry name" value="TGS"/>
</dbReference>
<dbReference type="InterPro" id="IPR012676">
    <property type="entry name" value="TGS-like"/>
</dbReference>
<dbReference type="InterPro" id="IPR002320">
    <property type="entry name" value="Thr-tRNA-ligase_IIa"/>
</dbReference>
<dbReference type="InterPro" id="IPR018163">
    <property type="entry name" value="Thr/Ala-tRNA-synth_IIc_edit"/>
</dbReference>
<dbReference type="InterPro" id="IPR047246">
    <property type="entry name" value="ThrRS_anticodon"/>
</dbReference>
<dbReference type="InterPro" id="IPR033728">
    <property type="entry name" value="ThrRS_core"/>
</dbReference>
<dbReference type="InterPro" id="IPR012947">
    <property type="entry name" value="tRNA_SAD"/>
</dbReference>
<dbReference type="NCBIfam" id="TIGR00418">
    <property type="entry name" value="thrS"/>
    <property type="match status" value="1"/>
</dbReference>
<dbReference type="PANTHER" id="PTHR11451:SF44">
    <property type="entry name" value="THREONINE--TRNA LIGASE, CHLOROPLASTIC_MITOCHONDRIAL 2"/>
    <property type="match status" value="1"/>
</dbReference>
<dbReference type="PANTHER" id="PTHR11451">
    <property type="entry name" value="THREONINE-TRNA LIGASE"/>
    <property type="match status" value="1"/>
</dbReference>
<dbReference type="Pfam" id="PF03129">
    <property type="entry name" value="HGTP_anticodon"/>
    <property type="match status" value="1"/>
</dbReference>
<dbReference type="Pfam" id="PF02824">
    <property type="entry name" value="TGS"/>
    <property type="match status" value="1"/>
</dbReference>
<dbReference type="Pfam" id="PF00587">
    <property type="entry name" value="tRNA-synt_2b"/>
    <property type="match status" value="1"/>
</dbReference>
<dbReference type="Pfam" id="PF07973">
    <property type="entry name" value="tRNA_SAD"/>
    <property type="match status" value="1"/>
</dbReference>
<dbReference type="PRINTS" id="PR01047">
    <property type="entry name" value="TRNASYNTHTHR"/>
</dbReference>
<dbReference type="SMART" id="SM00863">
    <property type="entry name" value="tRNA_SAD"/>
    <property type="match status" value="1"/>
</dbReference>
<dbReference type="SUPFAM" id="SSF52954">
    <property type="entry name" value="Class II aaRS ABD-related"/>
    <property type="match status" value="1"/>
</dbReference>
<dbReference type="SUPFAM" id="SSF55681">
    <property type="entry name" value="Class II aaRS and biotin synthetases"/>
    <property type="match status" value="1"/>
</dbReference>
<dbReference type="SUPFAM" id="SSF81271">
    <property type="entry name" value="TGS-like"/>
    <property type="match status" value="1"/>
</dbReference>
<dbReference type="SUPFAM" id="SSF55186">
    <property type="entry name" value="ThrRS/AlaRS common domain"/>
    <property type="match status" value="1"/>
</dbReference>
<dbReference type="PROSITE" id="PS50862">
    <property type="entry name" value="AA_TRNA_LIGASE_II"/>
    <property type="match status" value="1"/>
</dbReference>
<dbReference type="PROSITE" id="PS51880">
    <property type="entry name" value="TGS"/>
    <property type="match status" value="1"/>
</dbReference>
<keyword id="KW-0030">Aminoacyl-tRNA synthetase</keyword>
<keyword id="KW-0067">ATP-binding</keyword>
<keyword id="KW-0963">Cytoplasm</keyword>
<keyword id="KW-0436">Ligase</keyword>
<keyword id="KW-0479">Metal-binding</keyword>
<keyword id="KW-0547">Nucleotide-binding</keyword>
<keyword id="KW-0648">Protein biosynthesis</keyword>
<keyword id="KW-1185">Reference proteome</keyword>
<keyword id="KW-0694">RNA-binding</keyword>
<keyword id="KW-0820">tRNA-binding</keyword>
<keyword id="KW-0862">Zinc</keyword>
<accession>Q6M9L0</accession>
<proteinExistence type="inferred from homology"/>
<name>SYT_PARUW</name>
<feature type="chain" id="PRO_0000101019" description="Threonine--tRNA ligase">
    <location>
        <begin position="1"/>
        <end position="650"/>
    </location>
</feature>
<feature type="domain" description="TGS" evidence="2">
    <location>
        <begin position="5"/>
        <end position="67"/>
    </location>
</feature>
<feature type="region of interest" description="Catalytic" evidence="1">
    <location>
        <begin position="246"/>
        <end position="537"/>
    </location>
</feature>
<feature type="binding site" evidence="1">
    <location>
        <position position="337"/>
    </location>
    <ligand>
        <name>Zn(2+)</name>
        <dbReference type="ChEBI" id="CHEBI:29105"/>
    </ligand>
</feature>
<feature type="binding site" evidence="1">
    <location>
        <position position="388"/>
    </location>
    <ligand>
        <name>Zn(2+)</name>
        <dbReference type="ChEBI" id="CHEBI:29105"/>
    </ligand>
</feature>
<feature type="binding site" evidence="1">
    <location>
        <position position="514"/>
    </location>
    <ligand>
        <name>Zn(2+)</name>
        <dbReference type="ChEBI" id="CHEBI:29105"/>
    </ligand>
</feature>
<sequence length="650" mass="74957">MIRNNKSMFIKLKDQSSYEMPSGSTAKDLADKLNLKGPHEALGASINGKTVDLSYPLQEGDQVILWGFNDPEGKEIFWHTSAHVLAQAILRLWPDAQPTIGPPIENGFYYDFANLTISDADFEKIEKEMQAIISENFQIKREVISTKSDALKQFQNNPYKCELINSFEDESTLTGYRQGEFYDLCRGPHLFNLGKIKALKLMKTAGAYWRGDSNKEMLTRIYAISFPDRKLLKDYLHQLEEAKKRDHKLLGAKLDLFSLKEEAPGMPFIHPKGLIVWNQLVAYIRECLSRHDYIEIKTPTMMTKELWEISGHWGNYRQNMFISQIEDRDFAIKPMNCPGCMLYYKSHTHSYRELPLRIAEIGNVHRYEPSGSLSGLFRVRSFHQDDAHIFMKPSDIQQEILGVLALADEIYSTFGLSYRLELSTRPEKNTIGTDHEWEVATAGLKGALDEMGKEYRINEGDGAFYGPKIDFHIRDAINRSWQCGTIQLDMALPEKFELEYTFSDGTRQRPVMIHRAIFGSIERFFGILIEHYVGKFPLWLSPSQIRFITVADRHEPYARELAKRFKNAGFHVDVDSTQESVSKKVRNAQLAQFNYILTIGDQEVEHKTANLRTRDNVVHGEIQIDEFIQKLEIEKQQRQSHSPYASAERN</sequence>
<comment type="function">
    <text evidence="1">Catalyzes the attachment of threonine to tRNA(Thr) in a two-step reaction: L-threonine is first activated by ATP to form Thr-AMP and then transferred to the acceptor end of tRNA(Thr). Also edits incorrectly charged L-seryl-tRNA(Thr).</text>
</comment>
<comment type="catalytic activity">
    <reaction evidence="1">
        <text>tRNA(Thr) + L-threonine + ATP = L-threonyl-tRNA(Thr) + AMP + diphosphate + H(+)</text>
        <dbReference type="Rhea" id="RHEA:24624"/>
        <dbReference type="Rhea" id="RHEA-COMP:9670"/>
        <dbReference type="Rhea" id="RHEA-COMP:9704"/>
        <dbReference type="ChEBI" id="CHEBI:15378"/>
        <dbReference type="ChEBI" id="CHEBI:30616"/>
        <dbReference type="ChEBI" id="CHEBI:33019"/>
        <dbReference type="ChEBI" id="CHEBI:57926"/>
        <dbReference type="ChEBI" id="CHEBI:78442"/>
        <dbReference type="ChEBI" id="CHEBI:78534"/>
        <dbReference type="ChEBI" id="CHEBI:456215"/>
        <dbReference type="EC" id="6.1.1.3"/>
    </reaction>
</comment>
<comment type="cofactor">
    <cofactor evidence="1">
        <name>Zn(2+)</name>
        <dbReference type="ChEBI" id="CHEBI:29105"/>
    </cofactor>
    <text evidence="1">Binds 1 zinc ion per subunit.</text>
</comment>
<comment type="subunit">
    <text evidence="1">Homodimer.</text>
</comment>
<comment type="subcellular location">
    <subcellularLocation>
        <location evidence="1">Cytoplasm</location>
    </subcellularLocation>
</comment>
<comment type="similarity">
    <text evidence="1">Belongs to the class-II aminoacyl-tRNA synthetase family.</text>
</comment>
<reference key="1">
    <citation type="journal article" date="2004" name="Science">
        <title>Illuminating the evolutionary history of chlamydiae.</title>
        <authorList>
            <person name="Horn M."/>
            <person name="Collingro A."/>
            <person name="Schmitz-Esser S."/>
            <person name="Beier C.L."/>
            <person name="Purkhold U."/>
            <person name="Fartmann B."/>
            <person name="Brandt P."/>
            <person name="Nyakatura G.J."/>
            <person name="Droege M."/>
            <person name="Frishman D."/>
            <person name="Rattei T."/>
            <person name="Mewes H.-W."/>
            <person name="Wagner M."/>
        </authorList>
    </citation>
    <scope>NUCLEOTIDE SEQUENCE [LARGE SCALE GENOMIC DNA]</scope>
    <source>
        <strain>UWE25</strain>
    </source>
</reference>
<gene>
    <name evidence="1" type="primary">thrS</name>
    <name type="ordered locus">pc2015</name>
</gene>
<protein>
    <recommendedName>
        <fullName evidence="1">Threonine--tRNA ligase</fullName>
        <ecNumber evidence="1">6.1.1.3</ecNumber>
    </recommendedName>
    <alternativeName>
        <fullName evidence="1">Threonyl-tRNA synthetase</fullName>
        <shortName evidence="1">ThrRS</shortName>
    </alternativeName>
</protein>